<gene>
    <name type="primary">LIPF</name>
</gene>
<evidence type="ECO:0000250" key="1">
    <source>
        <dbReference type="UniProtKB" id="P80035"/>
    </source>
</evidence>
<evidence type="ECO:0000255" key="2"/>
<evidence type="ECO:0000269" key="3">
    <source>
    </source>
</evidence>
<evidence type="ECO:0000269" key="4">
    <source>
    </source>
</evidence>
<evidence type="ECO:0000269" key="5">
    <source>
    </source>
</evidence>
<evidence type="ECO:0000269" key="6">
    <source>
    </source>
</evidence>
<evidence type="ECO:0000269" key="7">
    <source ref="4"/>
</evidence>
<evidence type="ECO:0000303" key="8">
    <source>
    </source>
</evidence>
<evidence type="ECO:0000303" key="9">
    <source>
    </source>
</evidence>
<evidence type="ECO:0000305" key="10"/>
<evidence type="ECO:0000305" key="11">
    <source>
    </source>
</evidence>
<evidence type="ECO:0007829" key="12">
    <source>
        <dbReference type="PDB" id="1HLG"/>
    </source>
</evidence>
<reference key="1">
    <citation type="journal article" date="1987" name="Biochim. Biophys. Acta">
        <title>Molecular cloning of a human gastric lipase and expression of the enzyme in yeast.</title>
        <authorList>
            <person name="Bodmer M.W."/>
            <person name="Angal S."/>
            <person name="Yarranton G.T."/>
            <person name="Harris T.J.R."/>
            <person name="Lyons A."/>
            <person name="King D.J."/>
            <person name="Pieroni G."/>
            <person name="Riviere C."/>
            <person name="Verger R."/>
            <person name="Lowe P.A."/>
        </authorList>
    </citation>
    <scope>NUCLEOTIDE SEQUENCE [MRNA] (ISOFORM 1)</scope>
</reference>
<reference key="2">
    <citation type="journal article" date="2004" name="Nat. Genet.">
        <title>Complete sequencing and characterization of 21,243 full-length human cDNAs.</title>
        <authorList>
            <person name="Ota T."/>
            <person name="Suzuki Y."/>
            <person name="Nishikawa T."/>
            <person name="Otsuki T."/>
            <person name="Sugiyama T."/>
            <person name="Irie R."/>
            <person name="Wakamatsu A."/>
            <person name="Hayashi K."/>
            <person name="Sato H."/>
            <person name="Nagai K."/>
            <person name="Kimura K."/>
            <person name="Makita H."/>
            <person name="Sekine M."/>
            <person name="Obayashi M."/>
            <person name="Nishi T."/>
            <person name="Shibahara T."/>
            <person name="Tanaka T."/>
            <person name="Ishii S."/>
            <person name="Yamamoto J."/>
            <person name="Saito K."/>
            <person name="Kawai Y."/>
            <person name="Isono Y."/>
            <person name="Nakamura Y."/>
            <person name="Nagahari K."/>
            <person name="Murakami K."/>
            <person name="Yasuda T."/>
            <person name="Iwayanagi T."/>
            <person name="Wagatsuma M."/>
            <person name="Shiratori A."/>
            <person name="Sudo H."/>
            <person name="Hosoiri T."/>
            <person name="Kaku Y."/>
            <person name="Kodaira H."/>
            <person name="Kondo H."/>
            <person name="Sugawara M."/>
            <person name="Takahashi M."/>
            <person name="Kanda K."/>
            <person name="Yokoi T."/>
            <person name="Furuya T."/>
            <person name="Kikkawa E."/>
            <person name="Omura Y."/>
            <person name="Abe K."/>
            <person name="Kamihara K."/>
            <person name="Katsuta N."/>
            <person name="Sato K."/>
            <person name="Tanikawa M."/>
            <person name="Yamazaki M."/>
            <person name="Ninomiya K."/>
            <person name="Ishibashi T."/>
            <person name="Yamashita H."/>
            <person name="Murakawa K."/>
            <person name="Fujimori K."/>
            <person name="Tanai H."/>
            <person name="Kimata M."/>
            <person name="Watanabe M."/>
            <person name="Hiraoka S."/>
            <person name="Chiba Y."/>
            <person name="Ishida S."/>
            <person name="Ono Y."/>
            <person name="Takiguchi S."/>
            <person name="Watanabe S."/>
            <person name="Yosida M."/>
            <person name="Hotuta T."/>
            <person name="Kusano J."/>
            <person name="Kanehori K."/>
            <person name="Takahashi-Fujii A."/>
            <person name="Hara H."/>
            <person name="Tanase T.-O."/>
            <person name="Nomura Y."/>
            <person name="Togiya S."/>
            <person name="Komai F."/>
            <person name="Hara R."/>
            <person name="Takeuchi K."/>
            <person name="Arita M."/>
            <person name="Imose N."/>
            <person name="Musashino K."/>
            <person name="Yuuki H."/>
            <person name="Oshima A."/>
            <person name="Sasaki N."/>
            <person name="Aotsuka S."/>
            <person name="Yoshikawa Y."/>
            <person name="Matsunawa H."/>
            <person name="Ichihara T."/>
            <person name="Shiohata N."/>
            <person name="Sano S."/>
            <person name="Moriya S."/>
            <person name="Momiyama H."/>
            <person name="Satoh N."/>
            <person name="Takami S."/>
            <person name="Terashima Y."/>
            <person name="Suzuki O."/>
            <person name="Nakagawa S."/>
            <person name="Senoh A."/>
            <person name="Mizoguchi H."/>
            <person name="Goto Y."/>
            <person name="Shimizu F."/>
            <person name="Wakebe H."/>
            <person name="Hishigaki H."/>
            <person name="Watanabe T."/>
            <person name="Sugiyama A."/>
            <person name="Takemoto M."/>
            <person name="Kawakami B."/>
            <person name="Yamazaki M."/>
            <person name="Watanabe K."/>
            <person name="Kumagai A."/>
            <person name="Itakura S."/>
            <person name="Fukuzumi Y."/>
            <person name="Fujimori Y."/>
            <person name="Komiyama M."/>
            <person name="Tashiro H."/>
            <person name="Tanigami A."/>
            <person name="Fujiwara T."/>
            <person name="Ono T."/>
            <person name="Yamada K."/>
            <person name="Fujii Y."/>
            <person name="Ozaki K."/>
            <person name="Hirao M."/>
            <person name="Ohmori Y."/>
            <person name="Kawabata A."/>
            <person name="Hikiji T."/>
            <person name="Kobatake N."/>
            <person name="Inagaki H."/>
            <person name="Ikema Y."/>
            <person name="Okamoto S."/>
            <person name="Okitani R."/>
            <person name="Kawakami T."/>
            <person name="Noguchi S."/>
            <person name="Itoh T."/>
            <person name="Shigeta K."/>
            <person name="Senba T."/>
            <person name="Matsumura K."/>
            <person name="Nakajima Y."/>
            <person name="Mizuno T."/>
            <person name="Morinaga M."/>
            <person name="Sasaki M."/>
            <person name="Togashi T."/>
            <person name="Oyama M."/>
            <person name="Hata H."/>
            <person name="Watanabe M."/>
            <person name="Komatsu T."/>
            <person name="Mizushima-Sugano J."/>
            <person name="Satoh T."/>
            <person name="Shirai Y."/>
            <person name="Takahashi Y."/>
            <person name="Nakagawa K."/>
            <person name="Okumura K."/>
            <person name="Nagase T."/>
            <person name="Nomura N."/>
            <person name="Kikuchi H."/>
            <person name="Masuho Y."/>
            <person name="Yamashita R."/>
            <person name="Nakai K."/>
            <person name="Yada T."/>
            <person name="Nakamura Y."/>
            <person name="Ohara O."/>
            <person name="Isogai T."/>
            <person name="Sugano S."/>
        </authorList>
    </citation>
    <scope>NUCLEOTIDE SEQUENCE [LARGE SCALE MRNA] (ISOFORMS 1; 2 AND 3)</scope>
    <source>
        <tissue>Stomach</tissue>
    </source>
</reference>
<reference key="3">
    <citation type="journal article" date="2007" name="BMC Genomics">
        <title>The full-ORF clone resource of the German cDNA consortium.</title>
        <authorList>
            <person name="Bechtel S."/>
            <person name="Rosenfelder H."/>
            <person name="Duda A."/>
            <person name="Schmidt C.P."/>
            <person name="Ernst U."/>
            <person name="Wellenreuther R."/>
            <person name="Mehrle A."/>
            <person name="Schuster C."/>
            <person name="Bahr A."/>
            <person name="Bloecker H."/>
            <person name="Heubner D."/>
            <person name="Hoerlein A."/>
            <person name="Michel G."/>
            <person name="Wedler H."/>
            <person name="Koehrer K."/>
            <person name="Ottenwaelder B."/>
            <person name="Poustka A."/>
            <person name="Wiemann S."/>
            <person name="Schupp I."/>
        </authorList>
    </citation>
    <scope>NUCLEOTIDE SEQUENCE [LARGE SCALE MRNA] (ISOFORM 4)</scope>
    <source>
        <tissue>Stomach</tissue>
    </source>
</reference>
<reference key="4">
    <citation type="submission" date="2004-05" db="EMBL/GenBank/DDBJ databases">
        <authorList>
            <consortium name="NIEHS SNPs program"/>
        </authorList>
    </citation>
    <scope>NUCLEOTIDE SEQUENCE [GENOMIC DNA]</scope>
    <scope>VARIANTS ALA-161; ILE-224 AND THR-348</scope>
</reference>
<reference key="5">
    <citation type="journal article" date="2004" name="Nature">
        <title>The DNA sequence and comparative analysis of human chromosome 10.</title>
        <authorList>
            <person name="Deloukas P."/>
            <person name="Earthrowl M.E."/>
            <person name="Grafham D.V."/>
            <person name="Rubenfield M."/>
            <person name="French L."/>
            <person name="Steward C.A."/>
            <person name="Sims S.K."/>
            <person name="Jones M.C."/>
            <person name="Searle S."/>
            <person name="Scott C."/>
            <person name="Howe K."/>
            <person name="Hunt S.E."/>
            <person name="Andrews T.D."/>
            <person name="Gilbert J.G.R."/>
            <person name="Swarbreck D."/>
            <person name="Ashurst J.L."/>
            <person name="Taylor A."/>
            <person name="Battles J."/>
            <person name="Bird C.P."/>
            <person name="Ainscough R."/>
            <person name="Almeida J.P."/>
            <person name="Ashwell R.I.S."/>
            <person name="Ambrose K.D."/>
            <person name="Babbage A.K."/>
            <person name="Bagguley C.L."/>
            <person name="Bailey J."/>
            <person name="Banerjee R."/>
            <person name="Bates K."/>
            <person name="Beasley H."/>
            <person name="Bray-Allen S."/>
            <person name="Brown A.J."/>
            <person name="Brown J.Y."/>
            <person name="Burford D.C."/>
            <person name="Burrill W."/>
            <person name="Burton J."/>
            <person name="Cahill P."/>
            <person name="Camire D."/>
            <person name="Carter N.P."/>
            <person name="Chapman J.C."/>
            <person name="Clark S.Y."/>
            <person name="Clarke G."/>
            <person name="Clee C.M."/>
            <person name="Clegg S."/>
            <person name="Corby N."/>
            <person name="Coulson A."/>
            <person name="Dhami P."/>
            <person name="Dutta I."/>
            <person name="Dunn M."/>
            <person name="Faulkner L."/>
            <person name="Frankish A."/>
            <person name="Frankland J.A."/>
            <person name="Garner P."/>
            <person name="Garnett J."/>
            <person name="Gribble S."/>
            <person name="Griffiths C."/>
            <person name="Grocock R."/>
            <person name="Gustafson E."/>
            <person name="Hammond S."/>
            <person name="Harley J.L."/>
            <person name="Hart E."/>
            <person name="Heath P.D."/>
            <person name="Ho T.P."/>
            <person name="Hopkins B."/>
            <person name="Horne J."/>
            <person name="Howden P.J."/>
            <person name="Huckle E."/>
            <person name="Hynds C."/>
            <person name="Johnson C."/>
            <person name="Johnson D."/>
            <person name="Kana A."/>
            <person name="Kay M."/>
            <person name="Kimberley A.M."/>
            <person name="Kershaw J.K."/>
            <person name="Kokkinaki M."/>
            <person name="Laird G.K."/>
            <person name="Lawlor S."/>
            <person name="Lee H.M."/>
            <person name="Leongamornlert D.A."/>
            <person name="Laird G."/>
            <person name="Lloyd C."/>
            <person name="Lloyd D.M."/>
            <person name="Loveland J."/>
            <person name="Lovell J."/>
            <person name="McLaren S."/>
            <person name="McLay K.E."/>
            <person name="McMurray A."/>
            <person name="Mashreghi-Mohammadi M."/>
            <person name="Matthews L."/>
            <person name="Milne S."/>
            <person name="Nickerson T."/>
            <person name="Nguyen M."/>
            <person name="Overton-Larty E."/>
            <person name="Palmer S.A."/>
            <person name="Pearce A.V."/>
            <person name="Peck A.I."/>
            <person name="Pelan S."/>
            <person name="Phillimore B."/>
            <person name="Porter K."/>
            <person name="Rice C.M."/>
            <person name="Rogosin A."/>
            <person name="Ross M.T."/>
            <person name="Sarafidou T."/>
            <person name="Sehra H.K."/>
            <person name="Shownkeen R."/>
            <person name="Skuce C.D."/>
            <person name="Smith M."/>
            <person name="Standring L."/>
            <person name="Sycamore N."/>
            <person name="Tester J."/>
            <person name="Thorpe A."/>
            <person name="Torcasso W."/>
            <person name="Tracey A."/>
            <person name="Tromans A."/>
            <person name="Tsolas J."/>
            <person name="Wall M."/>
            <person name="Walsh J."/>
            <person name="Wang H."/>
            <person name="Weinstock K."/>
            <person name="West A.P."/>
            <person name="Willey D.L."/>
            <person name="Whitehead S.L."/>
            <person name="Wilming L."/>
            <person name="Wray P.W."/>
            <person name="Young L."/>
            <person name="Chen Y."/>
            <person name="Lovering R.C."/>
            <person name="Moschonas N.K."/>
            <person name="Siebert R."/>
            <person name="Fechtel K."/>
            <person name="Bentley D."/>
            <person name="Durbin R.M."/>
            <person name="Hubbard T."/>
            <person name="Doucette-Stamm L."/>
            <person name="Beck S."/>
            <person name="Smith D.R."/>
            <person name="Rogers J."/>
        </authorList>
    </citation>
    <scope>NUCLEOTIDE SEQUENCE [LARGE SCALE GENOMIC DNA]</scope>
</reference>
<reference key="6">
    <citation type="submission" date="2005-09" db="EMBL/GenBank/DDBJ databases">
        <authorList>
            <person name="Mural R.J."/>
            <person name="Istrail S."/>
            <person name="Sutton G."/>
            <person name="Florea L."/>
            <person name="Halpern A.L."/>
            <person name="Mobarry C.M."/>
            <person name="Lippert R."/>
            <person name="Walenz B."/>
            <person name="Shatkay H."/>
            <person name="Dew I."/>
            <person name="Miller J.R."/>
            <person name="Flanigan M.J."/>
            <person name="Edwards N.J."/>
            <person name="Bolanos R."/>
            <person name="Fasulo D."/>
            <person name="Halldorsson B.V."/>
            <person name="Hannenhalli S."/>
            <person name="Turner R."/>
            <person name="Yooseph S."/>
            <person name="Lu F."/>
            <person name="Nusskern D.R."/>
            <person name="Shue B.C."/>
            <person name="Zheng X.H."/>
            <person name="Zhong F."/>
            <person name="Delcher A.L."/>
            <person name="Huson D.H."/>
            <person name="Kravitz S.A."/>
            <person name="Mouchard L."/>
            <person name="Reinert K."/>
            <person name="Remington K.A."/>
            <person name="Clark A.G."/>
            <person name="Waterman M.S."/>
            <person name="Eichler E.E."/>
            <person name="Adams M.D."/>
            <person name="Hunkapiller M.W."/>
            <person name="Myers E.W."/>
            <person name="Venter J.C."/>
        </authorList>
    </citation>
    <scope>NUCLEOTIDE SEQUENCE [LARGE SCALE GENOMIC DNA]</scope>
</reference>
<reference key="7">
    <citation type="journal article" date="2004" name="Genome Res.">
        <title>The status, quality, and expansion of the NIH full-length cDNA project: the Mammalian Gene Collection (MGC).</title>
        <authorList>
            <consortium name="The MGC Project Team"/>
        </authorList>
    </citation>
    <scope>NUCLEOTIDE SEQUENCE [LARGE SCALE MRNA] (ISOFORM 1)</scope>
    <scope>VARIANT ALA-161</scope>
</reference>
<reference key="8">
    <citation type="journal article" date="1989" name="Eur. J. Biochem.">
        <title>Human gastric lipase. The N-terminal tetrapeptide is essential for lipid binding and lipase activity.</title>
        <authorList>
            <person name="Bernbaeck S."/>
            <person name="Blaeckberg L."/>
        </authorList>
    </citation>
    <scope>PROTEIN SEQUENCE OF 20-45</scope>
</reference>
<reference key="9">
    <citation type="journal article" date="1990" name="J. Biol. Chem.">
        <title>Stereoselectivity of lipases. II. Stereoselective hydrolysis of triglycerides by gastric and pancreatic lipases.</title>
        <authorList>
            <person name="Rogalska E."/>
            <person name="Ransac S."/>
            <person name="Verger R."/>
        </authorList>
    </citation>
    <scope>FUNCTION</scope>
    <scope>CATALYTIC ACTIVITY</scope>
</reference>
<reference key="10">
    <citation type="journal article" date="1999" name="J. Biol. Chem.">
        <title>Crystal structure of human gastric lipase and model of lysosomal acid lipase, two lipolytic enzymes of medical interest.</title>
        <authorList>
            <person name="Roussel A."/>
            <person name="Canaan S."/>
            <person name="Egloff M.P."/>
            <person name="Riviere M."/>
            <person name="Dupuis L."/>
            <person name="Verger R."/>
            <person name="Cambillau C."/>
        </authorList>
    </citation>
    <scope>X-RAY CRYSTALLOGRAPHY (3.0 ANGSTROMS)</scope>
    <scope>FUNCTION</scope>
    <scope>CATALYTIC ACTIVITY</scope>
    <scope>ACTIVE SITES</scope>
    <scope>GLYCOSYLATION AT ASN-34; ASN-99; ASN-271 AND ASN-327</scope>
    <scope>DISULFIDE BOND</scope>
</reference>
<comment type="function">
    <text evidence="3 5">Catalyzes the hydrolysis of triacylglycerols to yield free fatty acids, diacylglycerol, monoacylglycerol, and glycerol (PubMed:10358049, PubMed:2243091). Shows a preferential hydrolysis at the sn-3 position of triacylglycerol (PubMed:2243091).</text>
</comment>
<comment type="catalytic activity">
    <reaction evidence="3 5">
        <text>a triacylglycerol + H2O = a diacylglycerol + a fatty acid + H(+)</text>
        <dbReference type="Rhea" id="RHEA:12044"/>
        <dbReference type="ChEBI" id="CHEBI:15377"/>
        <dbReference type="ChEBI" id="CHEBI:15378"/>
        <dbReference type="ChEBI" id="CHEBI:17855"/>
        <dbReference type="ChEBI" id="CHEBI:18035"/>
        <dbReference type="ChEBI" id="CHEBI:28868"/>
        <dbReference type="EC" id="3.1.1.3"/>
    </reaction>
</comment>
<comment type="catalytic activity">
    <reaction evidence="5">
        <text>1,2,3-tri-(9Z-octadecenoyl)-glycerol + H2O = 1,2-di-(9Z-octadecenoyl)-sn-glycerol + (9Z)-octadecenoate + H(+)</text>
        <dbReference type="Rhea" id="RHEA:39931"/>
        <dbReference type="ChEBI" id="CHEBI:15377"/>
        <dbReference type="ChEBI" id="CHEBI:15378"/>
        <dbReference type="ChEBI" id="CHEBI:30823"/>
        <dbReference type="ChEBI" id="CHEBI:52333"/>
        <dbReference type="ChEBI" id="CHEBI:53753"/>
    </reaction>
    <physiologicalReaction direction="left-to-right" evidence="11">
        <dbReference type="Rhea" id="RHEA:39932"/>
    </physiologicalReaction>
</comment>
<comment type="catalytic activity">
    <reaction evidence="5">
        <text>1,2,3-trioctanoylglycerol + H2O = 1,2-dioctanoyl-sn-glycerol + octanoate + H(+)</text>
        <dbReference type="Rhea" id="RHEA:40047"/>
        <dbReference type="ChEBI" id="CHEBI:15377"/>
        <dbReference type="ChEBI" id="CHEBI:15378"/>
        <dbReference type="ChEBI" id="CHEBI:25646"/>
        <dbReference type="ChEBI" id="CHEBI:76978"/>
        <dbReference type="ChEBI" id="CHEBI:76979"/>
    </reaction>
    <physiologicalReaction direction="left-to-right" evidence="11">
        <dbReference type="Rhea" id="RHEA:40048"/>
    </physiologicalReaction>
</comment>
<comment type="interaction">
    <interactant intactId="EBI-3386192">
        <id>P07098</id>
    </interactant>
    <interactant intactId="EBI-720984">
        <id>Q6UWE0</id>
        <label>LRSAM1</label>
    </interactant>
    <organismsDiffer>false</organismsDiffer>
    <experiments>2</experiments>
</comment>
<comment type="interaction">
    <interactant intactId="EBI-11979889">
        <id>P07098-3</id>
    </interactant>
    <interactant intactId="EBI-16439278">
        <id>Q6FHY5</id>
        <label>MEOX2</label>
    </interactant>
    <organismsDiffer>false</organismsDiffer>
    <experiments>3</experiments>
</comment>
<comment type="subcellular location">
    <subcellularLocation>
        <location evidence="1">Secreted</location>
    </subcellularLocation>
</comment>
<comment type="alternative products">
    <event type="alternative splicing"/>
    <isoform>
        <id>P07098-1</id>
        <name>1</name>
        <sequence type="displayed"/>
    </isoform>
    <isoform>
        <id>P07098-2</id>
        <name>2</name>
        <sequence type="described" ref="VSP_047296"/>
    </isoform>
    <isoform>
        <id>P07098-3</id>
        <name>3</name>
        <sequence type="described" ref="VSP_047295"/>
    </isoform>
    <isoform>
        <id>P07098-4</id>
        <name>4</name>
        <sequence type="described" ref="VSP_047295 VSP_047296"/>
    </isoform>
</comment>
<comment type="similarity">
    <text evidence="10">Belongs to the AB hydrolase superfamily. Lipase family.</text>
</comment>
<comment type="sequence caution" evidence="10">
    <conflict type="erroneous initiation">
        <sequence resource="EMBL-CDS" id="CAA29414"/>
    </conflict>
    <text>Truncated N-terminus.</text>
</comment>
<keyword id="KW-0002">3D-structure</keyword>
<keyword id="KW-0025">Alternative splicing</keyword>
<keyword id="KW-0903">Direct protein sequencing</keyword>
<keyword id="KW-1015">Disulfide bond</keyword>
<keyword id="KW-0325">Glycoprotein</keyword>
<keyword id="KW-0378">Hydrolase</keyword>
<keyword id="KW-0442">Lipid degradation</keyword>
<keyword id="KW-0443">Lipid metabolism</keyword>
<keyword id="KW-1267">Proteomics identification</keyword>
<keyword id="KW-1185">Reference proteome</keyword>
<keyword id="KW-0964">Secreted</keyword>
<keyword id="KW-0732">Signal</keyword>
<accession>P07098</accession>
<accession>B7Z723</accession>
<accession>F5H1P4</accession>
<accession>Q2M1P6</accession>
<accession>Q5VXI7</accession>
<accession>Q5VXI8</accession>
<accession>Q658L8</accession>
<organism>
    <name type="scientific">Homo sapiens</name>
    <name type="common">Human</name>
    <dbReference type="NCBI Taxonomy" id="9606"/>
    <lineage>
        <taxon>Eukaryota</taxon>
        <taxon>Metazoa</taxon>
        <taxon>Chordata</taxon>
        <taxon>Craniata</taxon>
        <taxon>Vertebrata</taxon>
        <taxon>Euteleostomi</taxon>
        <taxon>Mammalia</taxon>
        <taxon>Eutheria</taxon>
        <taxon>Euarchontoglires</taxon>
        <taxon>Primates</taxon>
        <taxon>Haplorrhini</taxon>
        <taxon>Catarrhini</taxon>
        <taxon>Hominidae</taxon>
        <taxon>Homo</taxon>
    </lineage>
</organism>
<protein>
    <recommendedName>
        <fullName>Gastric triacylglycerol lipase</fullName>
        <shortName>GL</shortName>
        <shortName>Gastric lipase</shortName>
        <ecNumber evidence="3 5">3.1.1.3</ecNumber>
    </recommendedName>
</protein>
<feature type="signal peptide" evidence="6">
    <location>
        <begin position="1"/>
        <end position="19"/>
    </location>
</feature>
<feature type="chain" id="PRO_0000017766" description="Gastric triacylglycerol lipase">
    <location>
        <begin position="20"/>
        <end position="398"/>
    </location>
</feature>
<feature type="domain" description="AB hydrolase-1" evidence="2">
    <location>
        <begin position="78"/>
        <end position="377"/>
    </location>
</feature>
<feature type="active site" description="Nucleophile" evidence="3">
    <location>
        <position position="172"/>
    </location>
</feature>
<feature type="active site" description="Charge relay system" evidence="3">
    <location>
        <position position="343"/>
    </location>
</feature>
<feature type="active site" description="Charge relay system" evidence="3">
    <location>
        <position position="372"/>
    </location>
</feature>
<feature type="glycosylation site" description="N-linked (GlcNAc...) asparagine" evidence="3">
    <location>
        <position position="34"/>
    </location>
</feature>
<feature type="glycosylation site" description="N-linked (GlcNAc...) asparagine" evidence="3">
    <location>
        <position position="99"/>
    </location>
</feature>
<feature type="glycosylation site" description="N-linked (GlcNAc...) asparagine" evidence="3">
    <location>
        <position position="271"/>
    </location>
</feature>
<feature type="glycosylation site" description="N-linked (GlcNAc...) asparagine" evidence="3">
    <location>
        <position position="327"/>
    </location>
</feature>
<feature type="disulfide bond" evidence="3">
    <location>
        <begin position="246"/>
        <end position="255"/>
    </location>
</feature>
<feature type="splice variant" id="VSP_047295" description="In isoform 3 and isoform 4." evidence="8 9">
    <original>M</original>
    <variation>MFSNANSRSKM</variation>
    <location>
        <position position="1"/>
    </location>
</feature>
<feature type="splice variant" id="VSP_047296" description="In isoform 2 and isoform 4." evidence="8 9">
    <location>
        <begin position="75"/>
        <end position="107"/>
    </location>
</feature>
<feature type="sequence variant" id="VAR_011947" description="In dbSNP:rs814628." evidence="4 7">
    <original>T</original>
    <variation>A</variation>
    <location>
        <position position="161"/>
    </location>
</feature>
<feature type="sequence variant" id="VAR_020565" description="In dbSNP:rs6586145." evidence="7">
    <original>F</original>
    <variation>I</variation>
    <location>
        <position position="224"/>
    </location>
</feature>
<feature type="sequence variant" id="VAR_020566" description="In dbSNP:rs17333991." evidence="7">
    <original>P</original>
    <variation>T</variation>
    <location>
        <position position="348"/>
    </location>
</feature>
<feature type="sequence conflict" description="In Ref. 2; BAH13459." evidence="10" ref="2">
    <original>D</original>
    <variation>N</variation>
    <location>
        <position position="350"/>
    </location>
</feature>
<feature type="helix" evidence="12">
    <location>
        <begin position="29"/>
        <end position="32"/>
    </location>
</feature>
<feature type="helix" evidence="12">
    <location>
        <begin position="35"/>
        <end position="41"/>
    </location>
</feature>
<feature type="strand" evidence="12">
    <location>
        <begin position="47"/>
        <end position="52"/>
    </location>
</feature>
<feature type="strand" evidence="12">
    <location>
        <begin position="56"/>
        <end position="64"/>
    </location>
</feature>
<feature type="strand" evidence="12">
    <location>
        <begin position="79"/>
        <end position="83"/>
    </location>
</feature>
<feature type="helix" evidence="12">
    <location>
        <begin position="90"/>
        <end position="94"/>
    </location>
</feature>
<feature type="helix" evidence="12">
    <location>
        <begin position="102"/>
        <end position="108"/>
    </location>
</feature>
<feature type="strand" evidence="12">
    <location>
        <begin position="112"/>
        <end position="115"/>
    </location>
</feature>
<feature type="strand" evidence="12">
    <location>
        <begin position="127"/>
        <end position="130"/>
    </location>
</feature>
<feature type="helix" evidence="12">
    <location>
        <begin position="136"/>
        <end position="138"/>
    </location>
</feature>
<feature type="helix" evidence="12">
    <location>
        <begin position="142"/>
        <end position="147"/>
    </location>
</feature>
<feature type="helix" evidence="12">
    <location>
        <begin position="149"/>
        <end position="161"/>
    </location>
</feature>
<feature type="strand" evidence="12">
    <location>
        <begin position="166"/>
        <end position="171"/>
    </location>
</feature>
<feature type="helix" evidence="12">
    <location>
        <begin position="173"/>
        <end position="184"/>
    </location>
</feature>
<feature type="helix" evidence="12">
    <location>
        <begin position="186"/>
        <end position="189"/>
    </location>
</feature>
<feature type="strand" evidence="12">
    <location>
        <begin position="192"/>
        <end position="199"/>
    </location>
</feature>
<feature type="helix" evidence="12">
    <location>
        <begin position="210"/>
        <end position="216"/>
    </location>
</feature>
<feature type="helix" evidence="12">
    <location>
        <begin position="219"/>
        <end position="226"/>
    </location>
</feature>
<feature type="strand" evidence="12">
    <location>
        <begin position="228"/>
        <end position="230"/>
    </location>
</feature>
<feature type="turn" evidence="12">
    <location>
        <begin position="234"/>
        <end position="239"/>
    </location>
</feature>
<feature type="helix" evidence="12">
    <location>
        <begin position="241"/>
        <end position="249"/>
    </location>
</feature>
<feature type="helix" evidence="12">
    <location>
        <begin position="252"/>
        <end position="255"/>
    </location>
</feature>
<feature type="helix" evidence="12">
    <location>
        <begin position="258"/>
        <end position="263"/>
    </location>
</feature>
<feature type="helix" evidence="12">
    <location>
        <begin position="272"/>
        <end position="274"/>
    </location>
</feature>
<feature type="helix" evidence="12">
    <location>
        <begin position="275"/>
        <end position="279"/>
    </location>
</feature>
<feature type="helix" evidence="12">
    <location>
        <begin position="288"/>
        <end position="300"/>
    </location>
</feature>
<feature type="helix" evidence="12">
    <location>
        <begin position="311"/>
        <end position="318"/>
    </location>
</feature>
<feature type="strand" evidence="12">
    <location>
        <begin position="319"/>
        <end position="322"/>
    </location>
</feature>
<feature type="helix" evidence="12">
    <location>
        <begin position="328"/>
        <end position="330"/>
    </location>
</feature>
<feature type="strand" evidence="12">
    <location>
        <begin position="335"/>
        <end position="340"/>
    </location>
</feature>
<feature type="strand" evidence="12">
    <location>
        <begin position="344"/>
        <end position="346"/>
    </location>
</feature>
<feature type="helix" evidence="12">
    <location>
        <begin position="348"/>
        <end position="357"/>
    </location>
</feature>
<feature type="strand" evidence="12">
    <location>
        <begin position="361"/>
        <end position="367"/>
    </location>
</feature>
<feature type="helix" evidence="12">
    <location>
        <begin position="374"/>
        <end position="377"/>
    </location>
</feature>
<feature type="helix" evidence="12">
    <location>
        <begin position="381"/>
        <end position="384"/>
    </location>
</feature>
<feature type="helix" evidence="12">
    <location>
        <begin position="386"/>
        <end position="393"/>
    </location>
</feature>
<feature type="turn" evidence="12">
    <location>
        <begin position="394"/>
        <end position="397"/>
    </location>
</feature>
<name>LIPF_HUMAN</name>
<dbReference type="EC" id="3.1.1.3" evidence="3 5"/>
<dbReference type="EMBL" id="X05997">
    <property type="protein sequence ID" value="CAA29413.1"/>
    <property type="molecule type" value="mRNA"/>
</dbReference>
<dbReference type="EMBL" id="X05997">
    <property type="protein sequence ID" value="CAA29414.1"/>
    <property type="status" value="ALT_INIT"/>
    <property type="molecule type" value="mRNA"/>
</dbReference>
<dbReference type="EMBL" id="AK301310">
    <property type="protein sequence ID" value="BAH13457.1"/>
    <property type="molecule type" value="mRNA"/>
</dbReference>
<dbReference type="EMBL" id="AK301320">
    <property type="protein sequence ID" value="BAH13459.1"/>
    <property type="molecule type" value="mRNA"/>
</dbReference>
<dbReference type="EMBL" id="AK312940">
    <property type="protein sequence ID" value="BAG35782.1"/>
    <property type="molecule type" value="mRNA"/>
</dbReference>
<dbReference type="EMBL" id="AL833751">
    <property type="protein sequence ID" value="CAH56244.1"/>
    <property type="molecule type" value="mRNA"/>
</dbReference>
<dbReference type="EMBL" id="AY631869">
    <property type="protein sequence ID" value="AAT38115.1"/>
    <property type="molecule type" value="Genomic_DNA"/>
</dbReference>
<dbReference type="EMBL" id="AL358532">
    <property type="status" value="NOT_ANNOTATED_CDS"/>
    <property type="molecule type" value="Genomic_DNA"/>
</dbReference>
<dbReference type="EMBL" id="CH471066">
    <property type="protein sequence ID" value="EAW50162.1"/>
    <property type="molecule type" value="Genomic_DNA"/>
</dbReference>
<dbReference type="EMBL" id="BC112272">
    <property type="protein sequence ID" value="AAI12273.1"/>
    <property type="molecule type" value="mRNA"/>
</dbReference>
<dbReference type="EMBL" id="BC113711">
    <property type="protein sequence ID" value="AAI13712.1"/>
    <property type="molecule type" value="mRNA"/>
</dbReference>
<dbReference type="CCDS" id="CCDS55718.1">
    <molecule id="P07098-3"/>
</dbReference>
<dbReference type="CCDS" id="CCDS55719.1">
    <molecule id="P07098-2"/>
</dbReference>
<dbReference type="CCDS" id="CCDS65896.1">
    <molecule id="P07098-4"/>
</dbReference>
<dbReference type="CCDS" id="CCDS7389.1">
    <molecule id="P07098-1"/>
</dbReference>
<dbReference type="PIR" id="S07145">
    <property type="entry name" value="S07145"/>
</dbReference>
<dbReference type="RefSeq" id="NP_001185757.1">
    <molecule id="P07098-2"/>
    <property type="nucleotide sequence ID" value="NM_001198828.2"/>
</dbReference>
<dbReference type="RefSeq" id="NP_001185758.1">
    <molecule id="P07098-3"/>
    <property type="nucleotide sequence ID" value="NM_001198829.2"/>
</dbReference>
<dbReference type="RefSeq" id="NP_001185759.1">
    <molecule id="P07098-4"/>
    <property type="nucleotide sequence ID" value="NM_001198830.2"/>
</dbReference>
<dbReference type="RefSeq" id="NP_004181.1">
    <molecule id="P07098-1"/>
    <property type="nucleotide sequence ID" value="NM_004190.4"/>
</dbReference>
<dbReference type="RefSeq" id="XP_011538613.1">
    <molecule id="P07098-1"/>
    <property type="nucleotide sequence ID" value="XM_011540311.2"/>
</dbReference>
<dbReference type="RefSeq" id="XP_054223025.1">
    <molecule id="P07098-1"/>
    <property type="nucleotide sequence ID" value="XM_054367050.1"/>
</dbReference>
<dbReference type="PDB" id="1HLG">
    <property type="method" value="X-ray"/>
    <property type="resolution" value="3.00 A"/>
    <property type="chains" value="A/B=28-398"/>
</dbReference>
<dbReference type="PDBsum" id="1HLG"/>
<dbReference type="SMR" id="P07098"/>
<dbReference type="BioGRID" id="114085">
    <property type="interactions" value="14"/>
</dbReference>
<dbReference type="CORUM" id="P07098"/>
<dbReference type="FunCoup" id="P07098">
    <property type="interactions" value="105"/>
</dbReference>
<dbReference type="IntAct" id="P07098">
    <property type="interactions" value="10"/>
</dbReference>
<dbReference type="STRING" id="9606.ENSP00000377900"/>
<dbReference type="ChEMBL" id="CHEMBL1796"/>
<dbReference type="DrugBank" id="DB06586">
    <property type="generic name" value="Cetilistat"/>
</dbReference>
<dbReference type="DrugBank" id="DB01083">
    <property type="generic name" value="Orlistat"/>
</dbReference>
<dbReference type="DrugBank" id="DB02457">
    <property type="generic name" value="Undecyl-Phosphinic Acid Butyl Ester"/>
</dbReference>
<dbReference type="DrugCentral" id="P07098"/>
<dbReference type="SwissLipids" id="SLP:000000524"/>
<dbReference type="ESTHER" id="human-LIPF">
    <property type="family name" value="Acidic_Lipase"/>
</dbReference>
<dbReference type="GlyCosmos" id="P07098">
    <property type="glycosylation" value="4 sites, No reported glycans"/>
</dbReference>
<dbReference type="GlyGen" id="P07098">
    <property type="glycosylation" value="4 sites"/>
</dbReference>
<dbReference type="iPTMnet" id="P07098"/>
<dbReference type="PhosphoSitePlus" id="P07098"/>
<dbReference type="BioMuta" id="LIPF"/>
<dbReference type="DMDM" id="126306"/>
<dbReference type="MassIVE" id="P07098"/>
<dbReference type="PaxDb" id="9606-ENSP00000377900"/>
<dbReference type="PeptideAtlas" id="P07098"/>
<dbReference type="ProteomicsDB" id="25718"/>
<dbReference type="ProteomicsDB" id="51948">
    <molecule id="P07098-1"/>
</dbReference>
<dbReference type="ProteomicsDB" id="65595"/>
<dbReference type="Antibodypedia" id="30193">
    <property type="antibodies" value="211 antibodies from 28 providers"/>
</dbReference>
<dbReference type="DNASU" id="8513"/>
<dbReference type="Ensembl" id="ENST00000238983.9">
    <molecule id="P07098-1"/>
    <property type="protein sequence ID" value="ENSP00000238983.5"/>
    <property type="gene ID" value="ENSG00000182333.15"/>
</dbReference>
<dbReference type="Ensembl" id="ENST00000355843.2">
    <molecule id="P07098-4"/>
    <property type="protein sequence ID" value="ENSP00000348101.3"/>
    <property type="gene ID" value="ENSG00000182333.15"/>
</dbReference>
<dbReference type="Ensembl" id="ENST00000394375.7">
    <molecule id="P07098-3"/>
    <property type="protein sequence ID" value="ENSP00000377900.3"/>
    <property type="gene ID" value="ENSG00000182333.15"/>
</dbReference>
<dbReference type="Ensembl" id="ENST00000608620.5">
    <molecule id="P07098-2"/>
    <property type="protein sequence ID" value="ENSP00000477140.1"/>
    <property type="gene ID" value="ENSG00000182333.15"/>
</dbReference>
<dbReference type="GeneID" id="8513"/>
<dbReference type="KEGG" id="hsa:8513"/>
<dbReference type="MANE-Select" id="ENST00000238983.9">
    <property type="protein sequence ID" value="ENSP00000238983.5"/>
    <property type="RefSeq nucleotide sequence ID" value="NM_004190.4"/>
    <property type="RefSeq protein sequence ID" value="NP_004181.1"/>
</dbReference>
<dbReference type="UCSC" id="uc001kfg.3">
    <molecule id="P07098-1"/>
    <property type="organism name" value="human"/>
</dbReference>
<dbReference type="AGR" id="HGNC:6622"/>
<dbReference type="CTD" id="8513"/>
<dbReference type="DisGeNET" id="8513"/>
<dbReference type="GeneCards" id="LIPF"/>
<dbReference type="HGNC" id="HGNC:6622">
    <property type="gene designation" value="LIPF"/>
</dbReference>
<dbReference type="HPA" id="ENSG00000182333">
    <property type="expression patterns" value="Tissue enriched (stomach)"/>
</dbReference>
<dbReference type="MIM" id="601980">
    <property type="type" value="gene"/>
</dbReference>
<dbReference type="neXtProt" id="NX_P07098"/>
<dbReference type="OpenTargets" id="ENSG00000182333"/>
<dbReference type="PharmGKB" id="PA30394"/>
<dbReference type="VEuPathDB" id="HostDB:ENSG00000182333"/>
<dbReference type="eggNOG" id="KOG2624">
    <property type="taxonomic scope" value="Eukaryota"/>
</dbReference>
<dbReference type="GeneTree" id="ENSGT00940000161066"/>
<dbReference type="HOGENOM" id="CLU_010974_0_0_1"/>
<dbReference type="InParanoid" id="P07098"/>
<dbReference type="OMA" id="WSRRNLY"/>
<dbReference type="OrthoDB" id="9974421at2759"/>
<dbReference type="PAN-GO" id="P07098">
    <property type="GO annotations" value="1 GO annotation based on evolutionary models"/>
</dbReference>
<dbReference type="PhylomeDB" id="P07098"/>
<dbReference type="TreeFam" id="TF315485"/>
<dbReference type="PathwayCommons" id="P07098"/>
<dbReference type="Reactome" id="R-HSA-192456">
    <property type="pathway name" value="Digestion of dietary lipid"/>
</dbReference>
<dbReference type="SignaLink" id="P07098"/>
<dbReference type="BioGRID-ORCS" id="8513">
    <property type="hits" value="8 hits in 1152 CRISPR screens"/>
</dbReference>
<dbReference type="ChiTaRS" id="LIPF">
    <property type="organism name" value="human"/>
</dbReference>
<dbReference type="EvolutionaryTrace" id="P07098"/>
<dbReference type="GenomeRNAi" id="8513"/>
<dbReference type="Pharos" id="P07098">
    <property type="development level" value="Tclin"/>
</dbReference>
<dbReference type="PRO" id="PR:P07098"/>
<dbReference type="Proteomes" id="UP000005640">
    <property type="component" value="Chromosome 10"/>
</dbReference>
<dbReference type="RNAct" id="P07098">
    <property type="molecule type" value="protein"/>
</dbReference>
<dbReference type="Bgee" id="ENSG00000182333">
    <property type="expression patterns" value="Expressed in cardia of stomach and 97 other cell types or tissues"/>
</dbReference>
<dbReference type="GO" id="GO:0005576">
    <property type="term" value="C:extracellular region"/>
    <property type="evidence" value="ECO:0007669"/>
    <property type="project" value="UniProtKB-SubCell"/>
</dbReference>
<dbReference type="GO" id="GO:0043231">
    <property type="term" value="C:intracellular membrane-bounded organelle"/>
    <property type="evidence" value="ECO:0000318"/>
    <property type="project" value="GO_Central"/>
</dbReference>
<dbReference type="GO" id="GO:0005739">
    <property type="term" value="C:mitochondrion"/>
    <property type="evidence" value="ECO:0007669"/>
    <property type="project" value="Ensembl"/>
</dbReference>
<dbReference type="GO" id="GO:0008289">
    <property type="term" value="F:lipid binding"/>
    <property type="evidence" value="ECO:0000303"/>
    <property type="project" value="UniProtKB"/>
</dbReference>
<dbReference type="GO" id="GO:0016615">
    <property type="term" value="F:malate dehydrogenase activity"/>
    <property type="evidence" value="ECO:0007669"/>
    <property type="project" value="Ensembl"/>
</dbReference>
<dbReference type="GO" id="GO:0004806">
    <property type="term" value="F:triacylglycerol lipase activity"/>
    <property type="evidence" value="ECO:0000314"/>
    <property type="project" value="UniProtKB"/>
</dbReference>
<dbReference type="GO" id="GO:0016042">
    <property type="term" value="P:lipid catabolic process"/>
    <property type="evidence" value="ECO:0007669"/>
    <property type="project" value="UniProtKB-KW"/>
</dbReference>
<dbReference type="GO" id="GO:0006108">
    <property type="term" value="P:malate metabolic process"/>
    <property type="evidence" value="ECO:0007669"/>
    <property type="project" value="Ensembl"/>
</dbReference>
<dbReference type="GO" id="GO:0006641">
    <property type="term" value="P:triglyceride metabolic process"/>
    <property type="evidence" value="ECO:0000303"/>
    <property type="project" value="UniProtKB"/>
</dbReference>
<dbReference type="FunFam" id="3.40.50.1820:FF:000012">
    <property type="entry name" value="Lipase"/>
    <property type="match status" value="1"/>
</dbReference>
<dbReference type="Gene3D" id="3.40.50.1820">
    <property type="entry name" value="alpha/beta hydrolase"/>
    <property type="match status" value="1"/>
</dbReference>
<dbReference type="InterPro" id="IPR000073">
    <property type="entry name" value="AB_hydrolase_1"/>
</dbReference>
<dbReference type="InterPro" id="IPR029058">
    <property type="entry name" value="AB_hydrolase_fold"/>
</dbReference>
<dbReference type="InterPro" id="IPR025483">
    <property type="entry name" value="Lipase_euk"/>
</dbReference>
<dbReference type="PANTHER" id="PTHR11005">
    <property type="entry name" value="LYSOSOMAL ACID LIPASE-RELATED"/>
    <property type="match status" value="1"/>
</dbReference>
<dbReference type="Pfam" id="PF00561">
    <property type="entry name" value="Abhydrolase_1"/>
    <property type="match status" value="1"/>
</dbReference>
<dbReference type="PIRSF" id="PIRSF000862">
    <property type="entry name" value="Steryl_ester_lip"/>
    <property type="match status" value="1"/>
</dbReference>
<dbReference type="SUPFAM" id="SSF53474">
    <property type="entry name" value="alpha/beta-Hydrolases"/>
    <property type="match status" value="1"/>
</dbReference>
<dbReference type="PROSITE" id="PS00120">
    <property type="entry name" value="LIPASE_SER"/>
    <property type="match status" value="1"/>
</dbReference>
<proteinExistence type="evidence at protein level"/>
<sequence length="398" mass="45238">MWLLLTMASLISVLGTTHGLFGKLHPGSPEVTMNISQMITYWGYPNEEYEVVTEDGYILEVNRIPYGKKNSGNTGQRPVVFLQHGLLASATNWISNLPNNSLAFILADAGYDVWLGNSRGNTWARRNLYYSPDSVEFWAFSFDEMAKYDLPATIDFIVKKTGQKQLHYVGHSQGTTIGFIAFSTNPSLAKRIKTFYALAPVATVKYTKSLINKLRFVPQSLFKFIFGDKIFYPHNFFDQFLATEVCSREMLNLLCSNALFIICGFDSKNFNTSRLDVYLSHNPAGTSVQNMFHWTQAVKSGKFQAYDWGSPVQNRMHYDQSQPPYYNVTAMNVPIAVWNGGKDLLADPQDVGLLLPKLPNLIYHKEIPFYNHLDFIWAMDAPQEVYNDIVSMISEDKK</sequence>